<protein>
    <recommendedName>
        <fullName>Carbonic anhydrase 5B, mitochondrial</fullName>
        <ecNumber evidence="5">4.2.1.1</ecNumber>
    </recommendedName>
    <alternativeName>
        <fullName>Carbonate dehydratase VB</fullName>
    </alternativeName>
    <alternativeName>
        <fullName>Carbonic anhydrase VB</fullName>
        <shortName>CA-VB</shortName>
    </alternativeName>
</protein>
<gene>
    <name type="primary">Ca5b</name>
    <name type="synonym">Car5b</name>
</gene>
<name>CAH5B_MOUSE</name>
<comment type="function">
    <text evidence="5">Mitochondrial carbonic anhydrase that catalyzes the reversible conversion of carbon dioxide to bicarbonate/HCO3.</text>
</comment>
<comment type="catalytic activity">
    <reaction evidence="5">
        <text>hydrogencarbonate + H(+) = CO2 + H2O</text>
        <dbReference type="Rhea" id="RHEA:10748"/>
        <dbReference type="ChEBI" id="CHEBI:15377"/>
        <dbReference type="ChEBI" id="CHEBI:15378"/>
        <dbReference type="ChEBI" id="CHEBI:16526"/>
        <dbReference type="ChEBI" id="CHEBI:17544"/>
        <dbReference type="EC" id="4.2.1.1"/>
    </reaction>
    <physiologicalReaction direction="left-to-right" evidence="7">
        <dbReference type="Rhea" id="RHEA:10749"/>
    </physiologicalReaction>
    <physiologicalReaction direction="right-to-left" evidence="7">
        <dbReference type="Rhea" id="RHEA:10750"/>
    </physiologicalReaction>
</comment>
<comment type="cofactor">
    <cofactor evidence="3">
        <name>Zn(2+)</name>
        <dbReference type="ChEBI" id="CHEBI:29105"/>
    </cofactor>
</comment>
<comment type="subcellular location">
    <subcellularLocation>
        <location evidence="5">Mitochondrion</location>
    </subcellularLocation>
</comment>
<comment type="tissue specificity">
    <text evidence="5">Expressed in the heart, liver, lung, kidney, testis, and skeletal muscle (at protein level).</text>
</comment>
<comment type="similarity">
    <text evidence="6">Belongs to the alpha-carbonic anhydrase family.</text>
</comment>
<keyword id="KW-0456">Lyase</keyword>
<keyword id="KW-0479">Metal-binding</keyword>
<keyword id="KW-0496">Mitochondrion</keyword>
<keyword id="KW-1185">Reference proteome</keyword>
<keyword id="KW-0809">Transit peptide</keyword>
<keyword id="KW-0862">Zinc</keyword>
<dbReference type="EC" id="4.2.1.1" evidence="5"/>
<dbReference type="EMBL" id="AF192978">
    <property type="protein sequence ID" value="AAF08291.1"/>
    <property type="molecule type" value="mRNA"/>
</dbReference>
<dbReference type="EMBL" id="AK085670">
    <property type="protein sequence ID" value="BAC39501.1"/>
    <property type="molecule type" value="mRNA"/>
</dbReference>
<dbReference type="EMBL" id="BC034413">
    <property type="protein sequence ID" value="AAH34413.1"/>
    <property type="molecule type" value="mRNA"/>
</dbReference>
<dbReference type="CCDS" id="CCDS30515.1"/>
<dbReference type="RefSeq" id="NP_851832.2">
    <property type="nucleotide sequence ID" value="NM_181315.4"/>
</dbReference>
<dbReference type="SMR" id="Q9QZA0"/>
<dbReference type="BioGRID" id="207805">
    <property type="interactions" value="3"/>
</dbReference>
<dbReference type="FunCoup" id="Q9QZA0">
    <property type="interactions" value="922"/>
</dbReference>
<dbReference type="STRING" id="10090.ENSMUSP00000033739"/>
<dbReference type="PhosphoSitePlus" id="Q9QZA0"/>
<dbReference type="SwissPalm" id="Q9QZA0"/>
<dbReference type="jPOST" id="Q9QZA0"/>
<dbReference type="PaxDb" id="10090-ENSMUSP00000033739"/>
<dbReference type="PeptideAtlas" id="Q9QZA0"/>
<dbReference type="ProteomicsDB" id="273899"/>
<dbReference type="Antibodypedia" id="541">
    <property type="antibodies" value="259 antibodies from 34 providers"/>
</dbReference>
<dbReference type="DNASU" id="56078"/>
<dbReference type="Ensembl" id="ENSMUST00000033739.5">
    <property type="protein sequence ID" value="ENSMUSP00000033739.5"/>
    <property type="gene ID" value="ENSMUSG00000031373.5"/>
</dbReference>
<dbReference type="GeneID" id="56078"/>
<dbReference type="KEGG" id="mmu:56078"/>
<dbReference type="UCSC" id="uc009uvb.2">
    <property type="organism name" value="mouse"/>
</dbReference>
<dbReference type="AGR" id="MGI:1926249"/>
<dbReference type="CTD" id="56078"/>
<dbReference type="MGI" id="MGI:1926249">
    <property type="gene designation" value="Car5b"/>
</dbReference>
<dbReference type="VEuPathDB" id="HostDB:ENSMUSG00000031373"/>
<dbReference type="eggNOG" id="KOG0382">
    <property type="taxonomic scope" value="Eukaryota"/>
</dbReference>
<dbReference type="GeneTree" id="ENSGT00940000156978"/>
<dbReference type="HOGENOM" id="CLU_039326_2_1_1"/>
<dbReference type="InParanoid" id="Q9QZA0"/>
<dbReference type="OMA" id="GESNDWG"/>
<dbReference type="OrthoDB" id="429145at2759"/>
<dbReference type="PhylomeDB" id="Q9QZA0"/>
<dbReference type="TreeFam" id="TF316425"/>
<dbReference type="Reactome" id="R-MMU-1475029">
    <property type="pathway name" value="Reversible hydration of carbon dioxide"/>
</dbReference>
<dbReference type="BioGRID-ORCS" id="56078">
    <property type="hits" value="2 hits in 78 CRISPR screens"/>
</dbReference>
<dbReference type="ChiTaRS" id="Car5b">
    <property type="organism name" value="mouse"/>
</dbReference>
<dbReference type="PRO" id="PR:Q9QZA0"/>
<dbReference type="Proteomes" id="UP000000589">
    <property type="component" value="Chromosome X"/>
</dbReference>
<dbReference type="RNAct" id="Q9QZA0">
    <property type="molecule type" value="protein"/>
</dbReference>
<dbReference type="Bgee" id="ENSMUSG00000031373">
    <property type="expression patterns" value="Expressed in white adipose tissue and 90 other cell types or tissues"/>
</dbReference>
<dbReference type="GO" id="GO:0005739">
    <property type="term" value="C:mitochondrion"/>
    <property type="evidence" value="ECO:0000314"/>
    <property type="project" value="MGI"/>
</dbReference>
<dbReference type="GO" id="GO:0004089">
    <property type="term" value="F:carbonate dehydratase activity"/>
    <property type="evidence" value="ECO:0000314"/>
    <property type="project" value="MGI"/>
</dbReference>
<dbReference type="GO" id="GO:0008270">
    <property type="term" value="F:zinc ion binding"/>
    <property type="evidence" value="ECO:0007669"/>
    <property type="project" value="InterPro"/>
</dbReference>
<dbReference type="GO" id="GO:0009617">
    <property type="term" value="P:response to bacterium"/>
    <property type="evidence" value="ECO:0000270"/>
    <property type="project" value="MGI"/>
</dbReference>
<dbReference type="FunFam" id="3.10.200.10:FF:000001">
    <property type="entry name" value="Carbonic anhydrase 2"/>
    <property type="match status" value="1"/>
</dbReference>
<dbReference type="Gene3D" id="3.10.200.10">
    <property type="entry name" value="Alpha carbonic anhydrase"/>
    <property type="match status" value="1"/>
</dbReference>
<dbReference type="InterPro" id="IPR001148">
    <property type="entry name" value="CA_dom"/>
</dbReference>
<dbReference type="InterPro" id="IPR036398">
    <property type="entry name" value="CA_dom_sf"/>
</dbReference>
<dbReference type="InterPro" id="IPR023561">
    <property type="entry name" value="Carbonic_anhydrase_a-class"/>
</dbReference>
<dbReference type="InterPro" id="IPR018338">
    <property type="entry name" value="Carbonic_anhydrase_a-class_CS"/>
</dbReference>
<dbReference type="PANTHER" id="PTHR18952">
    <property type="entry name" value="CARBONIC ANHYDRASE"/>
    <property type="match status" value="1"/>
</dbReference>
<dbReference type="PANTHER" id="PTHR18952:SF25">
    <property type="entry name" value="CARBONIC ANHYDRASE 5B, MITOCHONDRIAL-RELATED"/>
    <property type="match status" value="1"/>
</dbReference>
<dbReference type="Pfam" id="PF00194">
    <property type="entry name" value="Carb_anhydrase"/>
    <property type="match status" value="1"/>
</dbReference>
<dbReference type="SMART" id="SM01057">
    <property type="entry name" value="Carb_anhydrase"/>
    <property type="match status" value="1"/>
</dbReference>
<dbReference type="SUPFAM" id="SSF51069">
    <property type="entry name" value="Carbonic anhydrase"/>
    <property type="match status" value="1"/>
</dbReference>
<dbReference type="PROSITE" id="PS00162">
    <property type="entry name" value="ALPHA_CA_1"/>
    <property type="match status" value="1"/>
</dbReference>
<dbReference type="PROSITE" id="PS51144">
    <property type="entry name" value="ALPHA_CA_2"/>
    <property type="match status" value="1"/>
</dbReference>
<evidence type="ECO:0000250" key="1"/>
<evidence type="ECO:0000250" key="2">
    <source>
        <dbReference type="UniProtKB" id="P00918"/>
    </source>
</evidence>
<evidence type="ECO:0000250" key="3">
    <source>
        <dbReference type="UniProtKB" id="P23589"/>
    </source>
</evidence>
<evidence type="ECO:0000255" key="4">
    <source>
        <dbReference type="PROSITE-ProRule" id="PRU01134"/>
    </source>
</evidence>
<evidence type="ECO:0000269" key="5">
    <source>
    </source>
</evidence>
<evidence type="ECO:0000305" key="6"/>
<evidence type="ECO:0000305" key="7">
    <source>
    </source>
</evidence>
<accession>Q9QZA0</accession>
<accession>Q8C3J9</accession>
<accession>Q8K014</accession>
<organism>
    <name type="scientific">Mus musculus</name>
    <name type="common">Mouse</name>
    <dbReference type="NCBI Taxonomy" id="10090"/>
    <lineage>
        <taxon>Eukaryota</taxon>
        <taxon>Metazoa</taxon>
        <taxon>Chordata</taxon>
        <taxon>Craniata</taxon>
        <taxon>Vertebrata</taxon>
        <taxon>Euteleostomi</taxon>
        <taxon>Mammalia</taxon>
        <taxon>Eutheria</taxon>
        <taxon>Euarchontoglires</taxon>
        <taxon>Glires</taxon>
        <taxon>Rodentia</taxon>
        <taxon>Myomorpha</taxon>
        <taxon>Muroidea</taxon>
        <taxon>Muridae</taxon>
        <taxon>Murinae</taxon>
        <taxon>Mus</taxon>
        <taxon>Mus</taxon>
    </lineage>
</organism>
<feature type="transit peptide" description="Mitochondrion" evidence="1">
    <location>
        <begin position="1"/>
        <end position="33"/>
    </location>
</feature>
<feature type="chain" id="PRO_0000004238" description="Carbonic anhydrase 5B, mitochondrial">
    <location>
        <begin position="34"/>
        <end position="317"/>
    </location>
</feature>
<feature type="domain" description="Alpha-carbonic anhydrase" evidence="4">
    <location>
        <begin position="37"/>
        <end position="296"/>
    </location>
</feature>
<feature type="binding site" evidence="4">
    <location>
        <position position="130"/>
    </location>
    <ligand>
        <name>Zn(2+)</name>
        <dbReference type="ChEBI" id="CHEBI:29105"/>
        <note>catalytic</note>
    </ligand>
</feature>
<feature type="binding site" evidence="4">
    <location>
        <position position="132"/>
    </location>
    <ligand>
        <name>Zn(2+)</name>
        <dbReference type="ChEBI" id="CHEBI:29105"/>
        <note>catalytic</note>
    </ligand>
</feature>
<feature type="binding site" evidence="4">
    <location>
        <position position="155"/>
    </location>
    <ligand>
        <name>Zn(2+)</name>
        <dbReference type="ChEBI" id="CHEBI:29105"/>
        <note>catalytic</note>
    </ligand>
</feature>
<feature type="binding site" evidence="2">
    <location>
        <begin position="235"/>
        <end position="236"/>
    </location>
    <ligand>
        <name>substrate</name>
    </ligand>
</feature>
<feature type="sequence conflict" description="In Ref. 2; BAC39501." evidence="6" ref="2">
    <original>S</original>
    <variation>F</variation>
    <location>
        <position position="269"/>
    </location>
</feature>
<feature type="sequence conflict" description="In Ref. 1; AAF08291." evidence="6" ref="1">
    <original>P</original>
    <variation>A</variation>
    <location>
        <position position="308"/>
    </location>
</feature>
<sequence length="317" mass="36623">MAVMNHLRVILQVSSSTLPWRRCWVPRLVPRRSCSLYTCTYRTRNRALPPLWENLDLVPAGDRQSPINIRWRDSVYDPGLKPLTISYDPATCLHIWNNGYSFLVEFEDSTDKSVVEGGPLEHNYRLKQFHFHWGAIDAWGSEHTVDSKCYPAELHLVHWNAVKFESFEDAALEENGLAVIGVFLKLGKHHKELQKLVDTLPSIKHKDTLVEFGSFDPSCLMPTCPDYWTYSGSLTTPPLSESVTWIIKKQPVEVDRDQLEQFRTLLFTSEGEKEKRMVDNFRPLQPLMNRTVRSSFRHDYVLNIQVKPKPTASEVTP</sequence>
<reference key="1">
    <citation type="journal article" date="2000" name="Proc. Natl. Acad. Sci. U.S.A.">
        <title>Mitochondrial carbonic anhydrase CA VB: differences in tissue distribution and pattern of evolution from those of CA VA suggest distinct physiological roles.</title>
        <authorList>
            <person name="Shah G.N."/>
            <person name="Hewett-Emmett D."/>
            <person name="Grubb J.H."/>
            <person name="Migas M.C."/>
            <person name="Fleming R.E."/>
            <person name="Waheed A."/>
            <person name="Sly W.S."/>
        </authorList>
    </citation>
    <scope>NUCLEOTIDE SEQUENCE [MRNA]</scope>
    <scope>FUNCTION</scope>
    <scope>CATALYTIC ACTIVITY</scope>
    <scope>SUBCELLULAR LOCATION</scope>
    <scope>TISSUE SPECIFICITY</scope>
    <source>
        <tissue>Kidney</tissue>
    </source>
</reference>
<reference key="2">
    <citation type="journal article" date="2005" name="Science">
        <title>The transcriptional landscape of the mammalian genome.</title>
        <authorList>
            <person name="Carninci P."/>
            <person name="Kasukawa T."/>
            <person name="Katayama S."/>
            <person name="Gough J."/>
            <person name="Frith M.C."/>
            <person name="Maeda N."/>
            <person name="Oyama R."/>
            <person name="Ravasi T."/>
            <person name="Lenhard B."/>
            <person name="Wells C."/>
            <person name="Kodzius R."/>
            <person name="Shimokawa K."/>
            <person name="Bajic V.B."/>
            <person name="Brenner S.E."/>
            <person name="Batalov S."/>
            <person name="Forrest A.R."/>
            <person name="Zavolan M."/>
            <person name="Davis M.J."/>
            <person name="Wilming L.G."/>
            <person name="Aidinis V."/>
            <person name="Allen J.E."/>
            <person name="Ambesi-Impiombato A."/>
            <person name="Apweiler R."/>
            <person name="Aturaliya R.N."/>
            <person name="Bailey T.L."/>
            <person name="Bansal M."/>
            <person name="Baxter L."/>
            <person name="Beisel K.W."/>
            <person name="Bersano T."/>
            <person name="Bono H."/>
            <person name="Chalk A.M."/>
            <person name="Chiu K.P."/>
            <person name="Choudhary V."/>
            <person name="Christoffels A."/>
            <person name="Clutterbuck D.R."/>
            <person name="Crowe M.L."/>
            <person name="Dalla E."/>
            <person name="Dalrymple B.P."/>
            <person name="de Bono B."/>
            <person name="Della Gatta G."/>
            <person name="di Bernardo D."/>
            <person name="Down T."/>
            <person name="Engstrom P."/>
            <person name="Fagiolini M."/>
            <person name="Faulkner G."/>
            <person name="Fletcher C.F."/>
            <person name="Fukushima T."/>
            <person name="Furuno M."/>
            <person name="Futaki S."/>
            <person name="Gariboldi M."/>
            <person name="Georgii-Hemming P."/>
            <person name="Gingeras T.R."/>
            <person name="Gojobori T."/>
            <person name="Green R.E."/>
            <person name="Gustincich S."/>
            <person name="Harbers M."/>
            <person name="Hayashi Y."/>
            <person name="Hensch T.K."/>
            <person name="Hirokawa N."/>
            <person name="Hill D."/>
            <person name="Huminiecki L."/>
            <person name="Iacono M."/>
            <person name="Ikeo K."/>
            <person name="Iwama A."/>
            <person name="Ishikawa T."/>
            <person name="Jakt M."/>
            <person name="Kanapin A."/>
            <person name="Katoh M."/>
            <person name="Kawasawa Y."/>
            <person name="Kelso J."/>
            <person name="Kitamura H."/>
            <person name="Kitano H."/>
            <person name="Kollias G."/>
            <person name="Krishnan S.P."/>
            <person name="Kruger A."/>
            <person name="Kummerfeld S.K."/>
            <person name="Kurochkin I.V."/>
            <person name="Lareau L.F."/>
            <person name="Lazarevic D."/>
            <person name="Lipovich L."/>
            <person name="Liu J."/>
            <person name="Liuni S."/>
            <person name="McWilliam S."/>
            <person name="Madan Babu M."/>
            <person name="Madera M."/>
            <person name="Marchionni L."/>
            <person name="Matsuda H."/>
            <person name="Matsuzawa S."/>
            <person name="Miki H."/>
            <person name="Mignone F."/>
            <person name="Miyake S."/>
            <person name="Morris K."/>
            <person name="Mottagui-Tabar S."/>
            <person name="Mulder N."/>
            <person name="Nakano N."/>
            <person name="Nakauchi H."/>
            <person name="Ng P."/>
            <person name="Nilsson R."/>
            <person name="Nishiguchi S."/>
            <person name="Nishikawa S."/>
            <person name="Nori F."/>
            <person name="Ohara O."/>
            <person name="Okazaki Y."/>
            <person name="Orlando V."/>
            <person name="Pang K.C."/>
            <person name="Pavan W.J."/>
            <person name="Pavesi G."/>
            <person name="Pesole G."/>
            <person name="Petrovsky N."/>
            <person name="Piazza S."/>
            <person name="Reed J."/>
            <person name="Reid J.F."/>
            <person name="Ring B.Z."/>
            <person name="Ringwald M."/>
            <person name="Rost B."/>
            <person name="Ruan Y."/>
            <person name="Salzberg S.L."/>
            <person name="Sandelin A."/>
            <person name="Schneider C."/>
            <person name="Schoenbach C."/>
            <person name="Sekiguchi K."/>
            <person name="Semple C.A."/>
            <person name="Seno S."/>
            <person name="Sessa L."/>
            <person name="Sheng Y."/>
            <person name="Shibata Y."/>
            <person name="Shimada H."/>
            <person name="Shimada K."/>
            <person name="Silva D."/>
            <person name="Sinclair B."/>
            <person name="Sperling S."/>
            <person name="Stupka E."/>
            <person name="Sugiura K."/>
            <person name="Sultana R."/>
            <person name="Takenaka Y."/>
            <person name="Taki K."/>
            <person name="Tammoja K."/>
            <person name="Tan S.L."/>
            <person name="Tang S."/>
            <person name="Taylor M.S."/>
            <person name="Tegner J."/>
            <person name="Teichmann S.A."/>
            <person name="Ueda H.R."/>
            <person name="van Nimwegen E."/>
            <person name="Verardo R."/>
            <person name="Wei C.L."/>
            <person name="Yagi K."/>
            <person name="Yamanishi H."/>
            <person name="Zabarovsky E."/>
            <person name="Zhu S."/>
            <person name="Zimmer A."/>
            <person name="Hide W."/>
            <person name="Bult C."/>
            <person name="Grimmond S.M."/>
            <person name="Teasdale R.D."/>
            <person name="Liu E.T."/>
            <person name="Brusic V."/>
            <person name="Quackenbush J."/>
            <person name="Wahlestedt C."/>
            <person name="Mattick J.S."/>
            <person name="Hume D.A."/>
            <person name="Kai C."/>
            <person name="Sasaki D."/>
            <person name="Tomaru Y."/>
            <person name="Fukuda S."/>
            <person name="Kanamori-Katayama M."/>
            <person name="Suzuki M."/>
            <person name="Aoki J."/>
            <person name="Arakawa T."/>
            <person name="Iida J."/>
            <person name="Imamura K."/>
            <person name="Itoh M."/>
            <person name="Kato T."/>
            <person name="Kawaji H."/>
            <person name="Kawagashira N."/>
            <person name="Kawashima T."/>
            <person name="Kojima M."/>
            <person name="Kondo S."/>
            <person name="Konno H."/>
            <person name="Nakano K."/>
            <person name="Ninomiya N."/>
            <person name="Nishio T."/>
            <person name="Okada M."/>
            <person name="Plessy C."/>
            <person name="Shibata K."/>
            <person name="Shiraki T."/>
            <person name="Suzuki S."/>
            <person name="Tagami M."/>
            <person name="Waki K."/>
            <person name="Watahiki A."/>
            <person name="Okamura-Oho Y."/>
            <person name="Suzuki H."/>
            <person name="Kawai J."/>
            <person name="Hayashizaki Y."/>
        </authorList>
    </citation>
    <scope>NUCLEOTIDE SEQUENCE [LARGE SCALE MRNA]</scope>
    <source>
        <strain>C57BL/6J</strain>
        <tissue>Mammary gland</tissue>
    </source>
</reference>
<reference key="3">
    <citation type="journal article" date="2004" name="Genome Res.">
        <title>The status, quality, and expansion of the NIH full-length cDNA project: the Mammalian Gene Collection (MGC).</title>
        <authorList>
            <consortium name="The MGC Project Team"/>
        </authorList>
    </citation>
    <scope>NUCLEOTIDE SEQUENCE [LARGE SCALE MRNA]</scope>
    <source>
        <tissue>Kidney</tissue>
    </source>
</reference>
<reference key="4">
    <citation type="journal article" date="2010" name="Cell">
        <title>A tissue-specific atlas of mouse protein phosphorylation and expression.</title>
        <authorList>
            <person name="Huttlin E.L."/>
            <person name="Jedrychowski M.P."/>
            <person name="Elias J.E."/>
            <person name="Goswami T."/>
            <person name="Rad R."/>
            <person name="Beausoleil S.A."/>
            <person name="Villen J."/>
            <person name="Haas W."/>
            <person name="Sowa M.E."/>
            <person name="Gygi S.P."/>
        </authorList>
    </citation>
    <scope>IDENTIFICATION BY MASS SPECTROMETRY [LARGE SCALE ANALYSIS]</scope>
    <source>
        <tissue>Kidney</tissue>
    </source>
</reference>
<proteinExistence type="evidence at protein level"/>